<feature type="signal peptide" evidence="1">
    <location>
        <begin position="1"/>
        <end position="18"/>
    </location>
</feature>
<feature type="propeptide" id="PRO_0000459680" evidence="5">
    <location>
        <begin position="19"/>
        <end position="80"/>
    </location>
</feature>
<feature type="chain" id="PRO_5014266702" description="U19-hexatoxin-Hi1a" evidence="5">
    <location>
        <begin position="81"/>
        <end position="122"/>
    </location>
</feature>
<feature type="disulfide bond" evidence="5">
    <location>
        <begin position="81"/>
        <end position="96"/>
    </location>
</feature>
<feature type="disulfide bond" evidence="5">
    <location>
        <begin position="88"/>
        <end position="101"/>
    </location>
</feature>
<feature type="disulfide bond" evidence="5">
    <location>
        <begin position="95"/>
        <end position="116"/>
    </location>
</feature>
<accession>A0A1D0BR98</accession>
<keyword id="KW-0165">Cleavage on pair of basic residues</keyword>
<keyword id="KW-1015">Disulfide bond</keyword>
<keyword id="KW-0872">Ion channel impairing toxin</keyword>
<keyword id="KW-0964">Secreted</keyword>
<keyword id="KW-0732">Signal</keyword>
<keyword id="KW-0800">Toxin</keyword>
<organism>
    <name type="scientific">Hadronyche infensa</name>
    <name type="common">Fraser island funnel-web spider</name>
    <name type="synonym">Atrax infensus</name>
    <dbReference type="NCBI Taxonomy" id="153481"/>
    <lineage>
        <taxon>Eukaryota</taxon>
        <taxon>Metazoa</taxon>
        <taxon>Ecdysozoa</taxon>
        <taxon>Arthropoda</taxon>
        <taxon>Chelicerata</taxon>
        <taxon>Arachnida</taxon>
        <taxon>Araneae</taxon>
        <taxon>Mygalomorphae</taxon>
        <taxon>Hexathelidae</taxon>
        <taxon>Hadronyche</taxon>
    </lineage>
</organism>
<reference key="1">
    <citation type="journal article" date="2020" name="Proc. Natl. Acad. Sci. U.S.A.">
        <title>Structural venomics reveals evolution of a complex venom by duplication and diversification of an ancient peptide-encoding gene.</title>
        <authorList>
            <person name="Pineda S.S."/>
            <person name="Chin Y.K."/>
            <person name="Undheim E.A.B."/>
            <person name="Senff S."/>
            <person name="Mobli M."/>
            <person name="Dauly C."/>
            <person name="Escoubas P."/>
            <person name="Nicholson G.M."/>
            <person name="Kaas Q."/>
            <person name="Guo S."/>
            <person name="Herzig V."/>
            <person name="Mattick J.S."/>
            <person name="King G.F."/>
        </authorList>
    </citation>
    <scope>NUCLEOTIDE SEQUENCE [MRNA]</scope>
    <scope>IDENTIFICATION BY MASS SPECTROMETRY</scope>
    <scope>SUBCELLULAR LOCATION</scope>
    <source>
        <tissue>Venom</tissue>
        <tissue>Venom gland</tissue>
    </source>
</reference>
<reference evidence="6" key="2">
    <citation type="thesis" date="2012" institute="The University of Queensland" country="Australia">
        <title>Probing the chemical diversity of venom from the Australian Funnel-web spider Hadronyche infensa.</title>
        <authorList>
            <person name="Pineda S.S."/>
        </authorList>
    </citation>
    <scope>NUCLEOTIDE SEQUENCE [MRNA]</scope>
    <source>
        <tissue>Venom gland</tissue>
    </source>
</reference>
<reference evidence="6" key="3">
    <citation type="submission" date="2014-07" db="EMBL/GenBank/DDBJ databases">
        <authorList>
            <person name="Zhang J.E."/>
            <person name="Yang H."/>
            <person name="Guo J."/>
            <person name="Deng Z."/>
            <person name="Luo H."/>
            <person name="Luo M."/>
            <person name="Zhao B."/>
        </authorList>
    </citation>
    <scope>NUCLEOTIDE SEQUENCE [MRNA]</scope>
    <source>
        <tissue>Venom gland</tissue>
    </source>
</reference>
<proteinExistence type="evidence at protein level"/>
<dbReference type="EMBL" id="HACE01000023">
    <property type="protein sequence ID" value="CDZ18807.1"/>
    <property type="molecule type" value="mRNA"/>
</dbReference>
<dbReference type="EMBL" id="HACE01000055">
    <property type="protein sequence ID" value="CDZ18839.1"/>
    <property type="molecule type" value="mRNA"/>
</dbReference>
<dbReference type="EMBL" id="HACE01000060">
    <property type="protein sequence ID" value="CDZ18844.1"/>
    <property type="molecule type" value="mRNA"/>
</dbReference>
<dbReference type="EMBL" id="HACE01000092">
    <property type="protein sequence ID" value="CDZ18876.1"/>
    <property type="molecule type" value="mRNA"/>
</dbReference>
<dbReference type="SMR" id="A0A1D0BR98"/>
<dbReference type="GO" id="GO:0005576">
    <property type="term" value="C:extracellular region"/>
    <property type="evidence" value="ECO:0007669"/>
    <property type="project" value="UniProtKB-SubCell"/>
</dbReference>
<dbReference type="GO" id="GO:0019871">
    <property type="term" value="F:sodium channel inhibitor activity"/>
    <property type="evidence" value="ECO:0007669"/>
    <property type="project" value="InterPro"/>
</dbReference>
<dbReference type="GO" id="GO:0090729">
    <property type="term" value="F:toxin activity"/>
    <property type="evidence" value="ECO:0007669"/>
    <property type="project" value="UniProtKB-KW"/>
</dbReference>
<dbReference type="InterPro" id="IPR012627">
    <property type="entry name" value="Toxin_22"/>
</dbReference>
<dbReference type="Pfam" id="PF08092">
    <property type="entry name" value="Toxin_22"/>
    <property type="match status" value="1"/>
</dbReference>
<evidence type="ECO:0000255" key="1"/>
<evidence type="ECO:0000269" key="2">
    <source>
    </source>
</evidence>
<evidence type="ECO:0000303" key="3">
    <source>
    </source>
</evidence>
<evidence type="ECO:0000305" key="4"/>
<evidence type="ECO:0000305" key="5">
    <source>
    </source>
</evidence>
<evidence type="ECO:0000312" key="6">
    <source>
        <dbReference type="EMBL" id="CDZ18844.1"/>
    </source>
</evidence>
<name>TJ1A_HADIN</name>
<sequence length="122" mass="14043">MNTMIGFIVLLVSATVLGDPELDALRKELDERFDMEFKDGPMSEIQEKLFLQELEALDSELLEDDPQTDTYENSNFREKRCSGSDTPCYKGSKMCCRGLECTEPALYGIWYKSYFCKRPKKG</sequence>
<protein>
    <recommendedName>
        <fullName evidence="3">U19-hexatoxin-Hi1a</fullName>
        <shortName evidence="3">U19-HXTX-Hi1a</shortName>
    </recommendedName>
    <alternativeName>
        <fullName evidence="3">SF24 peptide</fullName>
    </alternativeName>
</protein>
<comment type="function">
    <text evidence="4">Probable ion channel inhibitor.</text>
</comment>
<comment type="subcellular location">
    <subcellularLocation>
        <location evidence="2">Secreted</location>
    </subcellularLocation>
</comment>
<comment type="tissue specificity">
    <text evidence="5">Expressed by the venom gland.</text>
</comment>
<comment type="domain">
    <text evidence="4">The presence of a 'disulfide through disulfide knot' structurally defines this protein as a knottin.</text>
</comment>